<evidence type="ECO:0000250" key="1">
    <source>
        <dbReference type="UniProtKB" id="P0CK64"/>
    </source>
</evidence>
<evidence type="ECO:0000250" key="2">
    <source>
        <dbReference type="UniProtKB" id="P0CK68"/>
    </source>
</evidence>
<evidence type="ECO:0000269" key="3">
    <source>
    </source>
</evidence>
<evidence type="ECO:0000269" key="4">
    <source>
    </source>
</evidence>
<evidence type="ECO:0000269" key="5">
    <source>
    </source>
</evidence>
<evidence type="ECO:0000305" key="6"/>
<evidence type="ECO:0000305" key="7">
    <source>
    </source>
</evidence>
<sequence>MEDFVRQCFNPMIVELAEKAMKEYGEDPKIETNKFAAICTHLEVCFMYSDFHFIDERGESIIVESGDPNALLKHRFEIIEGRDRIMAWTVVNSICNTTGVEKPKFLPDLYDYKENRFIEIGVTRREVHIYYLEKANKIKSEKTHIHIFSFTGEEMATKADYTLDEESRARIKTRLFTIRQEMASRSLWDSFVSPKEAKRQLKKNLRLQELCASLPTKVSHRTSPALKTLEPM</sequence>
<reference key="1">
    <citation type="journal article" date="2009" name="Science">
        <title>Antigenic and genetic characteristics of swine-origin 2009 A(H1N1) influenza viruses circulating in humans.</title>
        <authorList>
            <person name="Garten R.J."/>
            <person name="Davis C.T."/>
            <person name="Russell C.A."/>
            <person name="Shu B."/>
            <person name="Lindstrom S."/>
            <person name="Balish A."/>
            <person name="Sessions W.M."/>
            <person name="Xu X."/>
            <person name="Skepner E."/>
            <person name="Deyde V."/>
            <person name="Okomo-Adhiambo M."/>
            <person name="Gubareva L."/>
            <person name="Barnes J."/>
            <person name="Smith C.B."/>
            <person name="Emery S.L."/>
            <person name="Hillman M.J."/>
            <person name="Rivailler P."/>
            <person name="Smagala J."/>
            <person name="de Graaf M."/>
            <person name="Burke D.F."/>
            <person name="Fouchier R.A."/>
            <person name="Pappas C."/>
            <person name="Alpuche-Aranda C.M."/>
            <person name="Lopez-Gatell H."/>
            <person name="Olivera H."/>
            <person name="Lopez I."/>
            <person name="Myers C.A."/>
            <person name="Faix D."/>
            <person name="Blair P.J."/>
            <person name="Yu C."/>
            <person name="Keene K.M."/>
            <person name="Dotson P.D."/>
            <person name="Boxrud D."/>
            <person name="Sambol A.R."/>
            <person name="Abid S.H."/>
            <person name="St George K."/>
            <person name="Bannerman T."/>
            <person name="Moore A.L."/>
            <person name="Stringer D.J."/>
            <person name="Blevins P."/>
            <person name="Demmler-Harrison G.J."/>
            <person name="Ginsberg M."/>
            <person name="Kriner P."/>
            <person name="Waterman S."/>
            <person name="Smole S."/>
            <person name="Guevara H.F."/>
            <person name="Belongia E.A."/>
            <person name="Clark P.A."/>
            <person name="Beatrice S.T."/>
            <person name="Donis R."/>
            <person name="Katz J."/>
            <person name="Finelli L."/>
            <person name="Bridges C.B."/>
            <person name="Shaw M."/>
            <person name="Jernigan D.B."/>
            <person name="Uyeki T.M."/>
            <person name="Smith D.J."/>
            <person name="Klimov A.I."/>
            <person name="Cox N.J."/>
        </authorList>
    </citation>
    <scope>NUCLEOTIDE SEQUENCE [GENOMIC DNA]</scope>
    <source>
        <strain>A/California/04/2009</strain>
    </source>
</reference>
<reference key="2">
    <citation type="journal article" date="2013" name="J. Virol.">
        <title>Identification of the N-terminal domain of the influenza virus PA responsible for the suppression of host protein synthesis.</title>
        <authorList>
            <person name="Desmet E.A."/>
            <person name="Bussey K.A."/>
            <person name="Stone R."/>
            <person name="Takimoto T."/>
        </authorList>
    </citation>
    <scope>FUNCTION</scope>
    <scope>DOMAIN</scope>
    <scope>MUTAGENESIS OF LYS-134</scope>
    <source>
        <strain>A/California/04/2009</strain>
    </source>
</reference>
<reference key="3">
    <citation type="journal article" date="2015" name="J. Virol.">
        <title>Influenza A Virus Protein PA-X Contributes to Viral Growth and Suppression of the Host Antiviral and Immune Responses.</title>
        <authorList>
            <person name="Hayashi T."/>
            <person name="MacDonald L.A."/>
            <person name="Takimoto T."/>
        </authorList>
    </citation>
    <scope>FUNCTION</scope>
    <source>
        <strain>A/California/04/2009</strain>
    </source>
</reference>
<reference key="4">
    <citation type="journal article" date="2016" name="J. Virol.">
        <title>Critical Role of the PA-X C-Terminal Domain of Influenza A Virus in Its Subcellular Localization and Shutoff Activity.</title>
        <authorList>
            <person name="Hayashi T."/>
            <person name="Chaimayo C."/>
            <person name="McGuinness J."/>
            <person name="Takimoto T."/>
        </authorList>
    </citation>
    <scope>SUBCELLULAR LOCATION</scope>
    <scope>DOMAIN</scope>
    <scope>MUTAGENESIS OF 195-LYS--ARG-199</scope>
    <scope>FUNCTION</scope>
    <source>
        <strain>A/California/04/2009</strain>
    </source>
</reference>
<proteinExistence type="evidence at protein level"/>
<protein>
    <recommendedName>
        <fullName>Protein PA-X</fullName>
        <ecNumber evidence="6">3.1.-.-</ecNumber>
    </recommendedName>
</protein>
<name>PAX_I09A0</name>
<dbReference type="EC" id="3.1.-.-" evidence="6"/>
<dbReference type="EMBL" id="FJ969515">
    <property type="status" value="NOT_ANNOTATED_CDS"/>
    <property type="molecule type" value="Viral_cRNA"/>
</dbReference>
<dbReference type="Proteomes" id="UP000132424">
    <property type="component" value="Genome"/>
</dbReference>
<keyword id="KW-1132">Decay of host mRNAs by virus</keyword>
<keyword id="KW-1262">Eukaryotic host gene expression shutoff by virus</keyword>
<keyword id="KW-1035">Host cytoplasm</keyword>
<keyword id="KW-1190">Host gene expression shutoff by virus</keyword>
<keyword id="KW-1192">Host mRNA suppression by virus</keyword>
<keyword id="KW-1048">Host nucleus</keyword>
<keyword id="KW-0945">Host-virus interaction</keyword>
<keyword id="KW-0378">Hydrolase</keyword>
<keyword id="KW-0688">Ribosomal frameshifting</keyword>
<keyword id="KW-0899">Viral immunoevasion</keyword>
<feature type="chain" id="PRO_0000462497" description="Protein PA-X">
    <location>
        <begin position="1"/>
        <end position="232"/>
    </location>
</feature>
<feature type="active site" evidence="2">
    <location>
        <position position="80"/>
    </location>
</feature>
<feature type="active site" evidence="2">
    <location>
        <position position="108"/>
    </location>
</feature>
<feature type="active site" evidence="7">
    <location>
        <position position="134"/>
    </location>
</feature>
<feature type="site" description="Important for efficient shutoff activity and nuclear localization" evidence="5">
    <location>
        <position position="195"/>
    </location>
</feature>
<feature type="site" description="Important for efficient shutoff activity and nuclear localization" evidence="5">
    <location>
        <position position="198"/>
    </location>
</feature>
<feature type="site" description="Important for efficient shutoff activity and nuclear localization" evidence="5">
    <location>
        <position position="199"/>
    </location>
</feature>
<feature type="site" description="Important for efficient shutoff activity" evidence="5">
    <location>
        <position position="202"/>
    </location>
</feature>
<feature type="site" description="Important for efficient shutoff activity" evidence="5">
    <location>
        <position position="203"/>
    </location>
</feature>
<feature type="site" description="Important for efficient shutoff activity" evidence="5">
    <location>
        <position position="206"/>
    </location>
</feature>
<feature type="mutagenesis site" description="Complete loss of shutoff activity." evidence="3">
    <original>K</original>
    <variation>A</variation>
    <location>
        <position position="134"/>
    </location>
</feature>
<feature type="mutagenesis site" description="357-fold reduction in shutoff activity." evidence="5">
    <original>KEAKR</original>
    <variation>EEAEE</variation>
    <location>
        <begin position="195"/>
        <end position="199"/>
    </location>
</feature>
<gene>
    <name type="primary">PA</name>
</gene>
<organismHost>
    <name type="scientific">Aves</name>
    <dbReference type="NCBI Taxonomy" id="8782"/>
</organismHost>
<organismHost>
    <name type="scientific">Homo sapiens</name>
    <name type="common">Human</name>
    <dbReference type="NCBI Taxonomy" id="9606"/>
</organismHost>
<organismHost>
    <name type="scientific">Sus scrofa</name>
    <name type="common">Pig</name>
    <dbReference type="NCBI Taxonomy" id="9823"/>
</organismHost>
<accession>P0DXO5</accession>
<organism>
    <name type="scientific">Influenza A virus (strain swl A/California/04/2009 H1N1)</name>
    <dbReference type="NCBI Taxonomy" id="641501"/>
    <lineage>
        <taxon>Viruses</taxon>
        <taxon>Riboviria</taxon>
        <taxon>Orthornavirae</taxon>
        <taxon>Negarnaviricota</taxon>
        <taxon>Polyploviricotina</taxon>
        <taxon>Insthoviricetes</taxon>
        <taxon>Articulavirales</taxon>
        <taxon>Orthomyxoviridae</taxon>
        <taxon>Alphainfluenzavirus</taxon>
        <taxon>Alphainfluenzavirus influenzae</taxon>
        <taxon>Influenza A virus</taxon>
    </lineage>
</organism>
<comment type="function">
    <text evidence="1 3 4 5">Plays a major role in the shutoff of the host protein expression by cleaving mRNAs probably via an endonuclease activity (PubMed:23283952, PubMed:25855745, PubMed:27226377). This host shutoff allows the virus to escape from the host antiviral response (PubMed:23283952, PubMed:25855745). Hijacks host RNA splicing machinery to selectively target host RNAs containing introns for destruction (By similarity). This may explain the preferential degradation of RNAs that have undergone co- or post-transcriptional processing (By similarity).</text>
</comment>
<comment type="subcellular location">
    <subcellularLocation>
        <location evidence="5">Host cytoplasm</location>
    </subcellularLocation>
    <subcellularLocation>
        <location evidence="5">Host nucleus</location>
    </subcellularLocation>
</comment>
<comment type="alternative products">
    <event type="ribosomal frameshifting"/>
    <isoform>
        <id>P0DXO5-1</id>
        <name>PA-X</name>
        <sequence type="displayed"/>
    </isoform>
    <isoform>
        <id>C3W5S0-1</id>
        <name>PA</name>
        <sequence type="external"/>
    </isoform>
</comment>
<comment type="domain">
    <text evidence="1 3 5">The probable endonuclease active site in the N-terminus and the basic amino acid cluster in the C-terminus are important for the shutoff activity (PubMed:23283952, PubMed:27226377). The C-terminus acts as a nuclear localization signal (PubMed:27226377). The C-terminus is recruited to host protein complexes involved in nuclear Pol II RNA processing (By similarity).</text>
</comment>
<comment type="similarity">
    <text evidence="6">Belongs to the influenza viruses PA-X family.</text>
</comment>
<comment type="caution">
    <text evidence="6">Most influenza A virus strains possess PA-X proteins with 252 amino-acids. However, some strains harbor shorter 232 amino-acid PA-X proteins due to the presence of an early stop codon.</text>
</comment>